<accession>Q51773</accession>
<evidence type="ECO:0000255" key="1">
    <source>
        <dbReference type="PROSITE-ProRule" id="PRU00254"/>
    </source>
</evidence>
<gene>
    <name type="primary">merD</name>
</gene>
<keyword id="KW-0238">DNA-binding</keyword>
<keyword id="KW-0475">Mercuric resistance</keyword>
<keyword id="KW-0614">Plasmid</keyword>
<keyword id="KW-0804">Transcription</keyword>
<keyword id="KW-0805">Transcription regulation</keyword>
<sequence>MSAYTVSRLALDAGVSVHIVRDYLLRGLLRPVACTPGGYGLFDDAALQRLCFVRA</sequence>
<protein>
    <recommendedName>
        <fullName>HTH-type transcriptional regulator MerD</fullName>
    </recommendedName>
    <alternativeName>
        <fullName>Mercuric resistance protein MerD</fullName>
    </alternativeName>
</protein>
<organism>
    <name type="scientific">Pseudomonas fluorescens</name>
    <dbReference type="NCBI Taxonomy" id="294"/>
    <lineage>
        <taxon>Bacteria</taxon>
        <taxon>Pseudomonadati</taxon>
        <taxon>Pseudomonadota</taxon>
        <taxon>Gammaproteobacteria</taxon>
        <taxon>Pseudomonadales</taxon>
        <taxon>Pseudomonadaceae</taxon>
        <taxon>Pseudomonas</taxon>
    </lineage>
</organism>
<reference key="1">
    <citation type="journal article" date="1994" name="Gene">
        <title>The sequence of the mer operon of pMER327/419 and transposon ends of pMER327/419, 330 and 05.</title>
        <authorList>
            <person name="Hobman J."/>
            <person name="Kholodii G."/>
            <person name="Nikiforov V."/>
            <person name="Ritchie D.A."/>
            <person name="Strike P."/>
            <person name="Yurieva O."/>
        </authorList>
    </citation>
    <scope>NUCLEOTIDE SEQUENCE [GENOMIC DNA]</scope>
</reference>
<dbReference type="EMBL" id="X73112">
    <property type="protein sequence ID" value="CAA51543.1"/>
    <property type="molecule type" value="Genomic_DNA"/>
</dbReference>
<dbReference type="SMR" id="Q51773"/>
<dbReference type="GO" id="GO:0003677">
    <property type="term" value="F:DNA binding"/>
    <property type="evidence" value="ECO:0007669"/>
    <property type="project" value="UniProtKB-KW"/>
</dbReference>
<dbReference type="GO" id="GO:0045892">
    <property type="term" value="P:negative regulation of DNA-templated transcription"/>
    <property type="evidence" value="ECO:0007669"/>
    <property type="project" value="InterPro"/>
</dbReference>
<dbReference type="GO" id="GO:0046689">
    <property type="term" value="P:response to mercury ion"/>
    <property type="evidence" value="ECO:0007669"/>
    <property type="project" value="UniProtKB-KW"/>
</dbReference>
<dbReference type="Gene3D" id="1.10.1660.10">
    <property type="match status" value="1"/>
</dbReference>
<dbReference type="InterPro" id="IPR009061">
    <property type="entry name" value="DNA-bd_dom_put_sf"/>
</dbReference>
<dbReference type="InterPro" id="IPR011797">
    <property type="entry name" value="MerD"/>
</dbReference>
<dbReference type="InterPro" id="IPR000551">
    <property type="entry name" value="MerR-type_HTH_dom"/>
</dbReference>
<dbReference type="NCBIfam" id="TIGR02054">
    <property type="entry name" value="MerD"/>
    <property type="match status" value="1"/>
</dbReference>
<dbReference type="Pfam" id="PF13411">
    <property type="entry name" value="MerR_1"/>
    <property type="match status" value="1"/>
</dbReference>
<dbReference type="PRINTS" id="PR00040">
    <property type="entry name" value="HTHMERR"/>
</dbReference>
<dbReference type="SMART" id="SM00422">
    <property type="entry name" value="HTH_MERR"/>
    <property type="match status" value="1"/>
</dbReference>
<dbReference type="SUPFAM" id="SSF46955">
    <property type="entry name" value="Putative DNA-binding domain"/>
    <property type="match status" value="1"/>
</dbReference>
<dbReference type="PROSITE" id="PS50937">
    <property type="entry name" value="HTH_MERR_2"/>
    <property type="match status" value="1"/>
</dbReference>
<proteinExistence type="predicted"/>
<name>MERD_PSEFL</name>
<feature type="chain" id="PRO_0000098131" description="HTH-type transcriptional regulator MerD">
    <location>
        <begin position="1"/>
        <end position="55" status="greater than"/>
    </location>
</feature>
<feature type="domain" description="HTH merR-type" evidence="1">
    <location>
        <begin position="3"/>
        <end position="55" status="greater than"/>
    </location>
</feature>
<feature type="DNA-binding region" description="H-T-H motif" evidence="1">
    <location>
        <begin position="6"/>
        <end position="25"/>
    </location>
</feature>
<feature type="non-terminal residue">
    <location>
        <position position="55"/>
    </location>
</feature>
<geneLocation type="plasmid">
    <name>pMER327</name>
</geneLocation>